<protein>
    <recommendedName>
        <fullName evidence="1">Cytidine deaminase</fullName>
        <ecNumber evidence="1">3.5.4.5</ecNumber>
    </recommendedName>
    <alternativeName>
        <fullName evidence="1">Cytidine aminohydrolase</fullName>
        <shortName evidence="1">CDA</shortName>
    </alternativeName>
</protein>
<feature type="chain" id="PRO_1000147102" description="Cytidine deaminase">
    <location>
        <begin position="1"/>
        <end position="294"/>
    </location>
</feature>
<feature type="domain" description="CMP/dCMP-type deaminase 1" evidence="2">
    <location>
        <begin position="48"/>
        <end position="168"/>
    </location>
</feature>
<feature type="domain" description="CMP/dCMP-type deaminase 2" evidence="2">
    <location>
        <begin position="186"/>
        <end position="294"/>
    </location>
</feature>
<feature type="active site" description="Proton donor" evidence="1">
    <location>
        <position position="104"/>
    </location>
</feature>
<feature type="binding site" evidence="1">
    <location>
        <begin position="89"/>
        <end position="91"/>
    </location>
    <ligand>
        <name>substrate</name>
    </ligand>
</feature>
<feature type="binding site" evidence="1">
    <location>
        <position position="102"/>
    </location>
    <ligand>
        <name>Zn(2+)</name>
        <dbReference type="ChEBI" id="CHEBI:29105"/>
        <note>catalytic</note>
    </ligand>
</feature>
<feature type="binding site" evidence="1">
    <location>
        <position position="129"/>
    </location>
    <ligand>
        <name>Zn(2+)</name>
        <dbReference type="ChEBI" id="CHEBI:29105"/>
        <note>catalytic</note>
    </ligand>
</feature>
<feature type="binding site" evidence="1">
    <location>
        <position position="132"/>
    </location>
    <ligand>
        <name>Zn(2+)</name>
        <dbReference type="ChEBI" id="CHEBI:29105"/>
        <note>catalytic</note>
    </ligand>
</feature>
<keyword id="KW-0378">Hydrolase</keyword>
<keyword id="KW-0479">Metal-binding</keyword>
<keyword id="KW-0862">Zinc</keyword>
<evidence type="ECO:0000255" key="1">
    <source>
        <dbReference type="HAMAP-Rule" id="MF_01558"/>
    </source>
</evidence>
<evidence type="ECO:0000255" key="2">
    <source>
        <dbReference type="PROSITE-ProRule" id="PRU01083"/>
    </source>
</evidence>
<accession>B1LKP0</accession>
<name>CDD_ECOSM</name>
<proteinExistence type="inferred from homology"/>
<comment type="function">
    <text evidence="1">This enzyme scavenges exogenous and endogenous cytidine and 2'-deoxycytidine for UMP synthesis.</text>
</comment>
<comment type="catalytic activity">
    <reaction evidence="1">
        <text>cytidine + H2O + H(+) = uridine + NH4(+)</text>
        <dbReference type="Rhea" id="RHEA:16069"/>
        <dbReference type="ChEBI" id="CHEBI:15377"/>
        <dbReference type="ChEBI" id="CHEBI:15378"/>
        <dbReference type="ChEBI" id="CHEBI:16704"/>
        <dbReference type="ChEBI" id="CHEBI:17562"/>
        <dbReference type="ChEBI" id="CHEBI:28938"/>
        <dbReference type="EC" id="3.5.4.5"/>
    </reaction>
</comment>
<comment type="catalytic activity">
    <reaction evidence="1">
        <text>2'-deoxycytidine + H2O + H(+) = 2'-deoxyuridine + NH4(+)</text>
        <dbReference type="Rhea" id="RHEA:13433"/>
        <dbReference type="ChEBI" id="CHEBI:15377"/>
        <dbReference type="ChEBI" id="CHEBI:15378"/>
        <dbReference type="ChEBI" id="CHEBI:15698"/>
        <dbReference type="ChEBI" id="CHEBI:16450"/>
        <dbReference type="ChEBI" id="CHEBI:28938"/>
        <dbReference type="EC" id="3.5.4.5"/>
    </reaction>
</comment>
<comment type="cofactor">
    <cofactor evidence="1">
        <name>Zn(2+)</name>
        <dbReference type="ChEBI" id="CHEBI:29105"/>
    </cofactor>
    <text evidence="1">Binds 1 zinc ion.</text>
</comment>
<comment type="subunit">
    <text evidence="1">Homodimer.</text>
</comment>
<comment type="similarity">
    <text evidence="1">Belongs to the cytidine and deoxycytidylate deaminase family.</text>
</comment>
<gene>
    <name evidence="1" type="primary">cdd</name>
    <name type="ordered locus">EcSMS35_2290</name>
</gene>
<reference key="1">
    <citation type="journal article" date="2008" name="J. Bacteriol.">
        <title>Insights into the environmental resistance gene pool from the genome sequence of the multidrug-resistant environmental isolate Escherichia coli SMS-3-5.</title>
        <authorList>
            <person name="Fricke W.F."/>
            <person name="Wright M.S."/>
            <person name="Lindell A.H."/>
            <person name="Harkins D.M."/>
            <person name="Baker-Austin C."/>
            <person name="Ravel J."/>
            <person name="Stepanauskas R."/>
        </authorList>
    </citation>
    <scope>NUCLEOTIDE SEQUENCE [LARGE SCALE GENOMIC DNA]</scope>
    <source>
        <strain>SMS-3-5 / SECEC</strain>
    </source>
</reference>
<sequence length="294" mass="31540">MHPRFQTAFAQLADNLQSALEPILADKYFPALLTGEQVSSLKSATGLDEDALAFALLPLAAACARTPLSNFNVGAIARGVSGTWYFGANMEFIGATMQQTVHAEQSAISHAWLSGEKALAAITVNYTPCGHCRQFMNELNSGLDLRIHLPGREAHALRDYLPDAFGPKDLEIKTLLMDEQDHGYALTGDALSQAAIAAANRSHMPYSKSPSGVALECKDGRIFSGSYAENAAFNPTLPPLQGALILLNLKGYDYPDIQRAVLAEKADAPLIQWDATSATLKALGCHSIDRVLLA</sequence>
<organism>
    <name type="scientific">Escherichia coli (strain SMS-3-5 / SECEC)</name>
    <dbReference type="NCBI Taxonomy" id="439855"/>
    <lineage>
        <taxon>Bacteria</taxon>
        <taxon>Pseudomonadati</taxon>
        <taxon>Pseudomonadota</taxon>
        <taxon>Gammaproteobacteria</taxon>
        <taxon>Enterobacterales</taxon>
        <taxon>Enterobacteriaceae</taxon>
        <taxon>Escherichia</taxon>
    </lineage>
</organism>
<dbReference type="EC" id="3.5.4.5" evidence="1"/>
<dbReference type="EMBL" id="CP000970">
    <property type="protein sequence ID" value="ACB16248.1"/>
    <property type="molecule type" value="Genomic_DNA"/>
</dbReference>
<dbReference type="RefSeq" id="WP_000553555.1">
    <property type="nucleotide sequence ID" value="NC_010498.1"/>
</dbReference>
<dbReference type="SMR" id="B1LKP0"/>
<dbReference type="GeneID" id="93775039"/>
<dbReference type="KEGG" id="ecm:EcSMS35_2290"/>
<dbReference type="HOGENOM" id="CLU_052424_0_0_6"/>
<dbReference type="Proteomes" id="UP000007011">
    <property type="component" value="Chromosome"/>
</dbReference>
<dbReference type="GO" id="GO:0005829">
    <property type="term" value="C:cytosol"/>
    <property type="evidence" value="ECO:0007669"/>
    <property type="project" value="TreeGrafter"/>
</dbReference>
<dbReference type="GO" id="GO:0004126">
    <property type="term" value="F:cytidine deaminase activity"/>
    <property type="evidence" value="ECO:0007669"/>
    <property type="project" value="UniProtKB-UniRule"/>
</dbReference>
<dbReference type="GO" id="GO:0042802">
    <property type="term" value="F:identical protein binding"/>
    <property type="evidence" value="ECO:0007669"/>
    <property type="project" value="UniProtKB-ARBA"/>
</dbReference>
<dbReference type="GO" id="GO:0008270">
    <property type="term" value="F:zinc ion binding"/>
    <property type="evidence" value="ECO:0007669"/>
    <property type="project" value="UniProtKB-UniRule"/>
</dbReference>
<dbReference type="GO" id="GO:0009972">
    <property type="term" value="P:cytidine deamination"/>
    <property type="evidence" value="ECO:0007669"/>
    <property type="project" value="InterPro"/>
</dbReference>
<dbReference type="CDD" id="cd01283">
    <property type="entry name" value="cytidine_deaminase"/>
    <property type="match status" value="2"/>
</dbReference>
<dbReference type="FunFam" id="3.40.140.10:FF:000006">
    <property type="entry name" value="Cytidine deaminase"/>
    <property type="match status" value="1"/>
</dbReference>
<dbReference type="FunFam" id="3.40.140.10:FF:000007">
    <property type="entry name" value="Cytidine deaminase"/>
    <property type="match status" value="1"/>
</dbReference>
<dbReference type="Gene3D" id="3.40.140.10">
    <property type="entry name" value="Cytidine Deaminase, domain 2"/>
    <property type="match status" value="2"/>
</dbReference>
<dbReference type="HAMAP" id="MF_01558">
    <property type="entry name" value="Cyt_deam"/>
    <property type="match status" value="1"/>
</dbReference>
<dbReference type="InterPro" id="IPR016192">
    <property type="entry name" value="APOBEC/CMP_deaminase_Zn-bd"/>
</dbReference>
<dbReference type="InterPro" id="IPR002125">
    <property type="entry name" value="CMP_dCMP_dom"/>
</dbReference>
<dbReference type="InterPro" id="IPR013171">
    <property type="entry name" value="Cyd/dCyd_deaminase_Zn-bd"/>
</dbReference>
<dbReference type="InterPro" id="IPR050202">
    <property type="entry name" value="Cyt/Deoxycyt_deaminase"/>
</dbReference>
<dbReference type="InterPro" id="IPR006263">
    <property type="entry name" value="Cyt_deam_dimer"/>
</dbReference>
<dbReference type="InterPro" id="IPR016193">
    <property type="entry name" value="Cytidine_deaminase-like"/>
</dbReference>
<dbReference type="InterPro" id="IPR020797">
    <property type="entry name" value="Cytidine_deaminase_bacteria"/>
</dbReference>
<dbReference type="NCBIfam" id="TIGR01355">
    <property type="entry name" value="cyt_deam_dimer"/>
    <property type="match status" value="1"/>
</dbReference>
<dbReference type="NCBIfam" id="NF006537">
    <property type="entry name" value="PRK09027.1"/>
    <property type="match status" value="1"/>
</dbReference>
<dbReference type="PANTHER" id="PTHR11644">
    <property type="entry name" value="CYTIDINE DEAMINASE"/>
    <property type="match status" value="1"/>
</dbReference>
<dbReference type="PANTHER" id="PTHR11644:SF2">
    <property type="entry name" value="CYTIDINE DEAMINASE"/>
    <property type="match status" value="1"/>
</dbReference>
<dbReference type="Pfam" id="PF00383">
    <property type="entry name" value="dCMP_cyt_deam_1"/>
    <property type="match status" value="1"/>
</dbReference>
<dbReference type="Pfam" id="PF08211">
    <property type="entry name" value="dCMP_cyt_deam_2"/>
    <property type="match status" value="1"/>
</dbReference>
<dbReference type="PIRSF" id="PIRSF006334">
    <property type="entry name" value="Cdd_plus_pseudo"/>
    <property type="match status" value="1"/>
</dbReference>
<dbReference type="SUPFAM" id="SSF53927">
    <property type="entry name" value="Cytidine deaminase-like"/>
    <property type="match status" value="2"/>
</dbReference>
<dbReference type="PROSITE" id="PS00903">
    <property type="entry name" value="CYT_DCMP_DEAMINASES_1"/>
    <property type="match status" value="1"/>
</dbReference>
<dbReference type="PROSITE" id="PS51747">
    <property type="entry name" value="CYT_DCMP_DEAMINASES_2"/>
    <property type="match status" value="2"/>
</dbReference>